<feature type="chain" id="PRO_0000378073" description="Transcription factor Sox-21">
    <location>
        <begin position="1"/>
        <end position="262"/>
    </location>
</feature>
<feature type="DNA-binding region" description="HMG box" evidence="2">
    <location>
        <begin position="8"/>
        <end position="76"/>
    </location>
</feature>
<protein>
    <recommendedName>
        <fullName evidence="4">Transcription factor Sox-21</fullName>
    </recommendedName>
    <alternativeName>
        <fullName>SRY (sex determining region Y)-box 21</fullName>
    </alternativeName>
</protein>
<organism>
    <name type="scientific">Xenopus laevis</name>
    <name type="common">African clawed frog</name>
    <dbReference type="NCBI Taxonomy" id="8355"/>
    <lineage>
        <taxon>Eukaryota</taxon>
        <taxon>Metazoa</taxon>
        <taxon>Chordata</taxon>
        <taxon>Craniata</taxon>
        <taxon>Vertebrata</taxon>
        <taxon>Euteleostomi</taxon>
        <taxon>Amphibia</taxon>
        <taxon>Batrachia</taxon>
        <taxon>Anura</taxon>
        <taxon>Pipoidea</taxon>
        <taxon>Pipidae</taxon>
        <taxon>Xenopodinae</taxon>
        <taxon>Xenopus</taxon>
        <taxon>Xenopus</taxon>
    </lineage>
</organism>
<accession>B0ZTE1</accession>
<keyword id="KW-0217">Developmental protein</keyword>
<keyword id="KW-0238">DNA-binding</keyword>
<keyword id="KW-0539">Nucleus</keyword>
<keyword id="KW-1185">Reference proteome</keyword>
<keyword id="KW-0678">Repressor</keyword>
<keyword id="KW-0804">Transcription</keyword>
<keyword id="KW-0805">Transcription regulation</keyword>
<gene>
    <name evidence="6" type="primary">sox21</name>
</gene>
<dbReference type="EMBL" id="EU403424">
    <property type="protein sequence ID" value="ABY90180.1"/>
    <property type="molecule type" value="Genomic_DNA"/>
</dbReference>
<dbReference type="SMR" id="B0ZTE1"/>
<dbReference type="KEGG" id="xla:100337612"/>
<dbReference type="AGR" id="Xenbase:XB-GENE-6464309"/>
<dbReference type="CTD" id="100337612"/>
<dbReference type="Xenbase" id="XB-GENE-6464309">
    <property type="gene designation" value="sox21.S"/>
</dbReference>
<dbReference type="OMA" id="CANMSKP"/>
<dbReference type="OrthoDB" id="6247875at2759"/>
<dbReference type="Proteomes" id="UP000186698">
    <property type="component" value="Chromosome 2S"/>
</dbReference>
<dbReference type="Bgee" id="100337612">
    <property type="expression patterns" value="Expressed in zone of skin and 7 other cell types or tissues"/>
</dbReference>
<dbReference type="GO" id="GO:0005634">
    <property type="term" value="C:nucleus"/>
    <property type="evidence" value="ECO:0000318"/>
    <property type="project" value="GO_Central"/>
</dbReference>
<dbReference type="GO" id="GO:0001228">
    <property type="term" value="F:DNA-binding transcription activator activity, RNA polymerase II-specific"/>
    <property type="evidence" value="ECO:0000318"/>
    <property type="project" value="GO_Central"/>
</dbReference>
<dbReference type="GO" id="GO:0000978">
    <property type="term" value="F:RNA polymerase II cis-regulatory region sequence-specific DNA binding"/>
    <property type="evidence" value="ECO:0000318"/>
    <property type="project" value="GO_Central"/>
</dbReference>
<dbReference type="GO" id="GO:0043565">
    <property type="term" value="F:sequence-specific DNA binding"/>
    <property type="evidence" value="ECO:0000250"/>
    <property type="project" value="UniProtKB"/>
</dbReference>
<dbReference type="GO" id="GO:0007420">
    <property type="term" value="P:brain development"/>
    <property type="evidence" value="ECO:0000318"/>
    <property type="project" value="GO_Central"/>
</dbReference>
<dbReference type="GO" id="GO:0045892">
    <property type="term" value="P:negative regulation of DNA-templated transcription"/>
    <property type="evidence" value="ECO:0000250"/>
    <property type="project" value="UniProtKB"/>
</dbReference>
<dbReference type="GO" id="GO:0000122">
    <property type="term" value="P:negative regulation of transcription by RNA polymerase II"/>
    <property type="evidence" value="ECO:0000250"/>
    <property type="project" value="UniProtKB"/>
</dbReference>
<dbReference type="GO" id="GO:0007399">
    <property type="term" value="P:nervous system development"/>
    <property type="evidence" value="ECO:0000270"/>
    <property type="project" value="UniProtKB"/>
</dbReference>
<dbReference type="GO" id="GO:0030182">
    <property type="term" value="P:neuron differentiation"/>
    <property type="evidence" value="ECO:0000318"/>
    <property type="project" value="GO_Central"/>
</dbReference>
<dbReference type="GO" id="GO:0045944">
    <property type="term" value="P:positive regulation of transcription by RNA polymerase II"/>
    <property type="evidence" value="ECO:0000318"/>
    <property type="project" value="GO_Central"/>
</dbReference>
<dbReference type="CDD" id="cd01388">
    <property type="entry name" value="HMG-box_SoxB"/>
    <property type="match status" value="1"/>
</dbReference>
<dbReference type="FunFam" id="1.10.30.10:FF:000002">
    <property type="entry name" value="transcription factor Sox-2"/>
    <property type="match status" value="1"/>
</dbReference>
<dbReference type="Gene3D" id="1.10.30.10">
    <property type="entry name" value="High mobility group box domain"/>
    <property type="match status" value="1"/>
</dbReference>
<dbReference type="InterPro" id="IPR009071">
    <property type="entry name" value="HMG_box_dom"/>
</dbReference>
<dbReference type="InterPro" id="IPR036910">
    <property type="entry name" value="HMG_box_dom_sf"/>
</dbReference>
<dbReference type="InterPro" id="IPR022097">
    <property type="entry name" value="SOX_fam"/>
</dbReference>
<dbReference type="InterPro" id="IPR050140">
    <property type="entry name" value="SRY-related_HMG-box_TF-like"/>
</dbReference>
<dbReference type="PANTHER" id="PTHR10270">
    <property type="entry name" value="SOX TRANSCRIPTION FACTOR"/>
    <property type="match status" value="1"/>
</dbReference>
<dbReference type="PANTHER" id="PTHR10270:SF313">
    <property type="entry name" value="TRANSCRIPTION FACTOR SOX-21"/>
    <property type="match status" value="1"/>
</dbReference>
<dbReference type="Pfam" id="PF00505">
    <property type="entry name" value="HMG_box"/>
    <property type="match status" value="1"/>
</dbReference>
<dbReference type="Pfam" id="PF12336">
    <property type="entry name" value="SOXp"/>
    <property type="match status" value="1"/>
</dbReference>
<dbReference type="SMART" id="SM00398">
    <property type="entry name" value="HMG"/>
    <property type="match status" value="1"/>
</dbReference>
<dbReference type="SUPFAM" id="SSF47095">
    <property type="entry name" value="HMG-box"/>
    <property type="match status" value="1"/>
</dbReference>
<dbReference type="PROSITE" id="PS50118">
    <property type="entry name" value="HMG_BOX_2"/>
    <property type="match status" value="1"/>
</dbReference>
<comment type="function">
    <text evidence="1 3">Acts as a negative regulator of transcription (By similarity). May function as a switch in neuronal development.</text>
</comment>
<comment type="subcellular location">
    <subcellularLocation>
        <location evidence="2">Nucleus</location>
    </subcellularLocation>
</comment>
<comment type="tissue specificity">
    <text evidence="3">Expressed throughout the developing central nervous system, including the olfactory placodes, with strongest expression at the boundary between the midbrain and hindbrain.</text>
</comment>
<comment type="developmental stage">
    <text evidence="3">Expressed zygotically from stage 10 (early gastrula) to all subsequent embryonic stages.</text>
</comment>
<name>SOX21_XENLA</name>
<reference evidence="5 6" key="1">
    <citation type="journal article" date="2008" name="Int. J. Dev. Biol.">
        <title>Cloning and developmental expression of the soxB2 genes, sox14 and sox21, during Xenopus laevis embryogenesis.</title>
        <authorList>
            <person name="Cunningham D.D."/>
            <person name="Meng Z."/>
            <person name="Fritzsch B."/>
            <person name="Casey E.S."/>
        </authorList>
    </citation>
    <scope>NUCLEOTIDE SEQUENCE [GENOMIC DNA]</scope>
    <scope>PUTATIVE FUNCTION</scope>
    <scope>TISSUE SPECIFICITY</scope>
    <scope>DEVELOPMENTAL STAGE</scope>
</reference>
<proteinExistence type="evidence at transcript level"/>
<sequence>MSKPLDHVKRPMNAFMVWSRAQRRKMAQENPKMHNSEISKRLGAEWKLLTEAEKRPFIDEAKRLRAMHMKDHPDYKYRPRRKPKTLLKKDKFAFPMPYSLTGDHDGLKAVSLHGAGVLTDALLCHPEKAAAAAAAAAARVFFQPSAAAAAAAAAAASGSSTNPYSLFDLSSKMAEMTHSSSSIPYTSSIGYPQSSGGAFAGVTGGGHTHSHPSPGNPGYMIPCNCTGWPSPGLQPPLAYILFPGMGKPQLEPYPAAAYAAAL</sequence>
<evidence type="ECO:0000250" key="1">
    <source>
        <dbReference type="UniProtKB" id="Q9W7R5"/>
    </source>
</evidence>
<evidence type="ECO:0000255" key="2">
    <source>
        <dbReference type="PROSITE-ProRule" id="PRU00267"/>
    </source>
</evidence>
<evidence type="ECO:0000269" key="3">
    <source>
    </source>
</evidence>
<evidence type="ECO:0000303" key="4">
    <source>
    </source>
</evidence>
<evidence type="ECO:0000305" key="5"/>
<evidence type="ECO:0000312" key="6">
    <source>
        <dbReference type="EMBL" id="ABY90180.1"/>
    </source>
</evidence>